<feature type="chain" id="PRO_1000011829" description="Diaminopimelate epimerase">
    <location>
        <begin position="1"/>
        <end position="276"/>
    </location>
</feature>
<feature type="active site" description="Proton donor" evidence="1">
    <location>
        <position position="75"/>
    </location>
</feature>
<feature type="active site" description="Proton acceptor" evidence="1">
    <location>
        <position position="219"/>
    </location>
</feature>
<feature type="binding site" evidence="1">
    <location>
        <position position="13"/>
    </location>
    <ligand>
        <name>substrate</name>
    </ligand>
</feature>
<feature type="binding site" evidence="1">
    <location>
        <position position="46"/>
    </location>
    <ligand>
        <name>substrate</name>
    </ligand>
</feature>
<feature type="binding site" evidence="1">
    <location>
        <position position="66"/>
    </location>
    <ligand>
        <name>substrate</name>
    </ligand>
</feature>
<feature type="binding site" evidence="1">
    <location>
        <begin position="76"/>
        <end position="77"/>
    </location>
    <ligand>
        <name>substrate</name>
    </ligand>
</feature>
<feature type="binding site" evidence="1">
    <location>
        <position position="159"/>
    </location>
    <ligand>
        <name>substrate</name>
    </ligand>
</feature>
<feature type="binding site" evidence="1">
    <location>
        <position position="192"/>
    </location>
    <ligand>
        <name>substrate</name>
    </ligand>
</feature>
<feature type="binding site" evidence="1">
    <location>
        <begin position="210"/>
        <end position="211"/>
    </location>
    <ligand>
        <name>substrate</name>
    </ligand>
</feature>
<feature type="binding site" evidence="1">
    <location>
        <begin position="220"/>
        <end position="221"/>
    </location>
    <ligand>
        <name>substrate</name>
    </ligand>
</feature>
<feature type="site" description="Could be important to modulate the pK values of the two catalytic cysteine residues" evidence="1">
    <location>
        <position position="161"/>
    </location>
</feature>
<feature type="site" description="Could be important to modulate the pK values of the two catalytic cysteine residues" evidence="1">
    <location>
        <position position="210"/>
    </location>
</feature>
<feature type="site" description="Important for dimerization" evidence="1">
    <location>
        <position position="270"/>
    </location>
</feature>
<gene>
    <name evidence="1" type="primary">dapF</name>
    <name type="ordered locus">AHA_0474</name>
</gene>
<protein>
    <recommendedName>
        <fullName evidence="1">Diaminopimelate epimerase</fullName>
        <shortName evidence="1">DAP epimerase</shortName>
        <ecNumber evidence="1">5.1.1.7</ecNumber>
    </recommendedName>
    <alternativeName>
        <fullName evidence="1">PLP-independent amino acid racemase</fullName>
    </alternativeName>
</protein>
<reference key="1">
    <citation type="journal article" date="2006" name="J. Bacteriol.">
        <title>Genome sequence of Aeromonas hydrophila ATCC 7966T: jack of all trades.</title>
        <authorList>
            <person name="Seshadri R."/>
            <person name="Joseph S.W."/>
            <person name="Chopra A.K."/>
            <person name="Sha J."/>
            <person name="Shaw J."/>
            <person name="Graf J."/>
            <person name="Haft D.H."/>
            <person name="Wu M."/>
            <person name="Ren Q."/>
            <person name="Rosovitz M.J."/>
            <person name="Madupu R."/>
            <person name="Tallon L."/>
            <person name="Kim M."/>
            <person name="Jin S."/>
            <person name="Vuong H."/>
            <person name="Stine O.C."/>
            <person name="Ali A."/>
            <person name="Horneman A.J."/>
            <person name="Heidelberg J.F."/>
        </authorList>
    </citation>
    <scope>NUCLEOTIDE SEQUENCE [LARGE SCALE GENOMIC DNA]</scope>
    <source>
        <strain>ATCC 7966 / DSM 30187 / BCRC 13018 / CCUG 14551 / JCM 1027 / KCTC 2358 / NCIMB 9240 / NCTC 8049</strain>
    </source>
</reference>
<keyword id="KW-0028">Amino-acid biosynthesis</keyword>
<keyword id="KW-0963">Cytoplasm</keyword>
<keyword id="KW-0413">Isomerase</keyword>
<keyword id="KW-0457">Lysine biosynthesis</keyword>
<keyword id="KW-1185">Reference proteome</keyword>
<comment type="function">
    <text evidence="1">Catalyzes the stereoinversion of LL-2,6-diaminopimelate (L,L-DAP) to meso-diaminopimelate (meso-DAP), a precursor of L-lysine and an essential component of the bacterial peptidoglycan.</text>
</comment>
<comment type="catalytic activity">
    <reaction evidence="1">
        <text>(2S,6S)-2,6-diaminopimelate = meso-2,6-diaminopimelate</text>
        <dbReference type="Rhea" id="RHEA:15393"/>
        <dbReference type="ChEBI" id="CHEBI:57609"/>
        <dbReference type="ChEBI" id="CHEBI:57791"/>
        <dbReference type="EC" id="5.1.1.7"/>
    </reaction>
</comment>
<comment type="pathway">
    <text evidence="1">Amino-acid biosynthesis; L-lysine biosynthesis via DAP pathway; DL-2,6-diaminopimelate from LL-2,6-diaminopimelate: step 1/1.</text>
</comment>
<comment type="subunit">
    <text evidence="1">Homodimer.</text>
</comment>
<comment type="subcellular location">
    <subcellularLocation>
        <location evidence="1">Cytoplasm</location>
    </subcellularLocation>
</comment>
<comment type="similarity">
    <text evidence="1">Belongs to the diaminopimelate epimerase family.</text>
</comment>
<sequence>MLIDFSKMHGLGNDFMVVDGVTQKVFFSNEVIKKLADRHFGIGFDQLLLVEPPYDPELDFHYRIFNADGSEVEQCGNGARCFARFVRLKGLINRDRIAVSTARGRIVLQLEGENQVTVNMGVPQFEPGKIPFRAQKAEKTYLLRAQEHTVMCGAVSMGNPHCVIEVPSVADAPVATLGPIMERHERFPERVNVGFMEMVNASEIKLRVFERGVGETLACGTGACAAVVVGISQGKLKERVTVTLPGGKLTIAWKGPGQPVYMTGPAEHVFDGQIEL</sequence>
<proteinExistence type="inferred from homology"/>
<accession>A0KFI1</accession>
<organism>
    <name type="scientific">Aeromonas hydrophila subsp. hydrophila (strain ATCC 7966 / DSM 30187 / BCRC 13018 / CCUG 14551 / JCM 1027 / KCTC 2358 / NCIMB 9240 / NCTC 8049)</name>
    <dbReference type="NCBI Taxonomy" id="380703"/>
    <lineage>
        <taxon>Bacteria</taxon>
        <taxon>Pseudomonadati</taxon>
        <taxon>Pseudomonadota</taxon>
        <taxon>Gammaproteobacteria</taxon>
        <taxon>Aeromonadales</taxon>
        <taxon>Aeromonadaceae</taxon>
        <taxon>Aeromonas</taxon>
    </lineage>
</organism>
<name>DAPF_AERHH</name>
<evidence type="ECO:0000255" key="1">
    <source>
        <dbReference type="HAMAP-Rule" id="MF_00197"/>
    </source>
</evidence>
<dbReference type="EC" id="5.1.1.7" evidence="1"/>
<dbReference type="EMBL" id="CP000462">
    <property type="protein sequence ID" value="ABK38916.1"/>
    <property type="molecule type" value="Genomic_DNA"/>
</dbReference>
<dbReference type="RefSeq" id="WP_011704447.1">
    <property type="nucleotide sequence ID" value="NC_008570.1"/>
</dbReference>
<dbReference type="RefSeq" id="YP_855007.1">
    <property type="nucleotide sequence ID" value="NC_008570.1"/>
</dbReference>
<dbReference type="SMR" id="A0KFI1"/>
<dbReference type="STRING" id="380703.AHA_0474"/>
<dbReference type="EnsemblBacteria" id="ABK38916">
    <property type="protein sequence ID" value="ABK38916"/>
    <property type="gene ID" value="AHA_0474"/>
</dbReference>
<dbReference type="GeneID" id="4488892"/>
<dbReference type="KEGG" id="aha:AHA_0474"/>
<dbReference type="PATRIC" id="fig|380703.7.peg.467"/>
<dbReference type="eggNOG" id="COG0253">
    <property type="taxonomic scope" value="Bacteria"/>
</dbReference>
<dbReference type="HOGENOM" id="CLU_053306_1_1_6"/>
<dbReference type="OrthoDB" id="9805408at2"/>
<dbReference type="UniPathway" id="UPA00034">
    <property type="reaction ID" value="UER00025"/>
</dbReference>
<dbReference type="Proteomes" id="UP000000756">
    <property type="component" value="Chromosome"/>
</dbReference>
<dbReference type="GO" id="GO:0005829">
    <property type="term" value="C:cytosol"/>
    <property type="evidence" value="ECO:0007669"/>
    <property type="project" value="TreeGrafter"/>
</dbReference>
<dbReference type="GO" id="GO:0008837">
    <property type="term" value="F:diaminopimelate epimerase activity"/>
    <property type="evidence" value="ECO:0007669"/>
    <property type="project" value="UniProtKB-UniRule"/>
</dbReference>
<dbReference type="GO" id="GO:0009089">
    <property type="term" value="P:lysine biosynthetic process via diaminopimelate"/>
    <property type="evidence" value="ECO:0007669"/>
    <property type="project" value="UniProtKB-UniRule"/>
</dbReference>
<dbReference type="FunFam" id="3.10.310.10:FF:000001">
    <property type="entry name" value="Diaminopimelate epimerase"/>
    <property type="match status" value="1"/>
</dbReference>
<dbReference type="FunFam" id="3.10.310.10:FF:000002">
    <property type="entry name" value="Diaminopimelate epimerase"/>
    <property type="match status" value="1"/>
</dbReference>
<dbReference type="Gene3D" id="3.10.310.10">
    <property type="entry name" value="Diaminopimelate Epimerase, Chain A, domain 1"/>
    <property type="match status" value="2"/>
</dbReference>
<dbReference type="HAMAP" id="MF_00197">
    <property type="entry name" value="DAP_epimerase"/>
    <property type="match status" value="1"/>
</dbReference>
<dbReference type="InterPro" id="IPR018510">
    <property type="entry name" value="DAP_epimerase_AS"/>
</dbReference>
<dbReference type="InterPro" id="IPR001653">
    <property type="entry name" value="DAP_epimerase_DapF"/>
</dbReference>
<dbReference type="NCBIfam" id="TIGR00652">
    <property type="entry name" value="DapF"/>
    <property type="match status" value="1"/>
</dbReference>
<dbReference type="PANTHER" id="PTHR31689:SF0">
    <property type="entry name" value="DIAMINOPIMELATE EPIMERASE"/>
    <property type="match status" value="1"/>
</dbReference>
<dbReference type="PANTHER" id="PTHR31689">
    <property type="entry name" value="DIAMINOPIMELATE EPIMERASE, CHLOROPLASTIC"/>
    <property type="match status" value="1"/>
</dbReference>
<dbReference type="Pfam" id="PF01678">
    <property type="entry name" value="DAP_epimerase"/>
    <property type="match status" value="2"/>
</dbReference>
<dbReference type="SUPFAM" id="SSF54506">
    <property type="entry name" value="Diaminopimelate epimerase-like"/>
    <property type="match status" value="1"/>
</dbReference>
<dbReference type="PROSITE" id="PS01326">
    <property type="entry name" value="DAP_EPIMERASE"/>
    <property type="match status" value="1"/>
</dbReference>